<proteinExistence type="inferred from homology"/>
<evidence type="ECO:0000255" key="1">
    <source>
        <dbReference type="HAMAP-Rule" id="MF_00210"/>
    </source>
</evidence>
<organism>
    <name type="scientific">Legionella pneumophila subsp. pneumophila (strain Philadelphia 1 / ATCC 33152 / DSM 7513)</name>
    <dbReference type="NCBI Taxonomy" id="272624"/>
    <lineage>
        <taxon>Bacteria</taxon>
        <taxon>Pseudomonadati</taxon>
        <taxon>Pseudomonadota</taxon>
        <taxon>Gammaproteobacteria</taxon>
        <taxon>Legionellales</taxon>
        <taxon>Legionellaceae</taxon>
        <taxon>Legionella</taxon>
    </lineage>
</organism>
<protein>
    <recommendedName>
        <fullName evidence="1">3-phosphoshikimate 1-carboxyvinyltransferase</fullName>
        <ecNumber evidence="1">2.5.1.19</ecNumber>
    </recommendedName>
    <alternativeName>
        <fullName evidence="1">5-enolpyruvylshikimate-3-phosphate synthase</fullName>
        <shortName evidence="1">EPSP synthase</shortName>
        <shortName evidence="1">EPSPS</shortName>
    </alternativeName>
</protein>
<gene>
    <name evidence="1" type="primary">aroA</name>
    <name type="ordered locus">lpg1419</name>
</gene>
<keyword id="KW-0028">Amino-acid biosynthesis</keyword>
<keyword id="KW-0057">Aromatic amino acid biosynthesis</keyword>
<keyword id="KW-0963">Cytoplasm</keyword>
<keyword id="KW-1185">Reference proteome</keyword>
<keyword id="KW-0808">Transferase</keyword>
<dbReference type="EC" id="2.5.1.19" evidence="1"/>
<dbReference type="EMBL" id="AE017354">
    <property type="protein sequence ID" value="AAU27501.1"/>
    <property type="molecule type" value="Genomic_DNA"/>
</dbReference>
<dbReference type="RefSeq" id="WP_010947148.1">
    <property type="nucleotide sequence ID" value="NC_002942.5"/>
</dbReference>
<dbReference type="RefSeq" id="YP_095448.1">
    <property type="nucleotide sequence ID" value="NC_002942.5"/>
</dbReference>
<dbReference type="SMR" id="Q5ZVM1"/>
<dbReference type="STRING" id="272624.lpg1419"/>
<dbReference type="PaxDb" id="272624-lpg1419"/>
<dbReference type="GeneID" id="57035409"/>
<dbReference type="KEGG" id="lpn:lpg1419"/>
<dbReference type="PATRIC" id="fig|272624.6.peg.1489"/>
<dbReference type="eggNOG" id="COG0128">
    <property type="taxonomic scope" value="Bacteria"/>
</dbReference>
<dbReference type="HOGENOM" id="CLU_024321_0_1_6"/>
<dbReference type="OrthoDB" id="9809920at2"/>
<dbReference type="UniPathway" id="UPA00053">
    <property type="reaction ID" value="UER00089"/>
</dbReference>
<dbReference type="Proteomes" id="UP000000609">
    <property type="component" value="Chromosome"/>
</dbReference>
<dbReference type="GO" id="GO:0005737">
    <property type="term" value="C:cytoplasm"/>
    <property type="evidence" value="ECO:0007669"/>
    <property type="project" value="UniProtKB-SubCell"/>
</dbReference>
<dbReference type="GO" id="GO:0003866">
    <property type="term" value="F:3-phosphoshikimate 1-carboxyvinyltransferase activity"/>
    <property type="evidence" value="ECO:0007669"/>
    <property type="project" value="UniProtKB-UniRule"/>
</dbReference>
<dbReference type="GO" id="GO:0008652">
    <property type="term" value="P:amino acid biosynthetic process"/>
    <property type="evidence" value="ECO:0007669"/>
    <property type="project" value="UniProtKB-KW"/>
</dbReference>
<dbReference type="GO" id="GO:0009073">
    <property type="term" value="P:aromatic amino acid family biosynthetic process"/>
    <property type="evidence" value="ECO:0007669"/>
    <property type="project" value="UniProtKB-KW"/>
</dbReference>
<dbReference type="GO" id="GO:0009423">
    <property type="term" value="P:chorismate biosynthetic process"/>
    <property type="evidence" value="ECO:0007669"/>
    <property type="project" value="UniProtKB-UniRule"/>
</dbReference>
<dbReference type="CDD" id="cd01556">
    <property type="entry name" value="EPSP_synthase"/>
    <property type="match status" value="1"/>
</dbReference>
<dbReference type="FunFam" id="3.65.10.10:FF:000005">
    <property type="entry name" value="3-phosphoshikimate 1-carboxyvinyltransferase"/>
    <property type="match status" value="1"/>
</dbReference>
<dbReference type="FunFam" id="3.65.10.10:FF:000006">
    <property type="entry name" value="3-phosphoshikimate 1-carboxyvinyltransferase"/>
    <property type="match status" value="1"/>
</dbReference>
<dbReference type="Gene3D" id="3.65.10.10">
    <property type="entry name" value="Enolpyruvate transferase domain"/>
    <property type="match status" value="2"/>
</dbReference>
<dbReference type="HAMAP" id="MF_00210">
    <property type="entry name" value="EPSP_synth"/>
    <property type="match status" value="1"/>
</dbReference>
<dbReference type="InterPro" id="IPR001986">
    <property type="entry name" value="Enolpyruvate_Tfrase_dom"/>
</dbReference>
<dbReference type="InterPro" id="IPR036968">
    <property type="entry name" value="Enolpyruvate_Tfrase_sf"/>
</dbReference>
<dbReference type="InterPro" id="IPR006264">
    <property type="entry name" value="EPSP_synthase"/>
</dbReference>
<dbReference type="InterPro" id="IPR023193">
    <property type="entry name" value="EPSP_synthase_CS"/>
</dbReference>
<dbReference type="InterPro" id="IPR013792">
    <property type="entry name" value="RNA3'P_cycl/enolpyr_Trfase_a/b"/>
</dbReference>
<dbReference type="NCBIfam" id="TIGR01356">
    <property type="entry name" value="aroA"/>
    <property type="match status" value="1"/>
</dbReference>
<dbReference type="PANTHER" id="PTHR21090">
    <property type="entry name" value="AROM/DEHYDROQUINATE SYNTHASE"/>
    <property type="match status" value="1"/>
</dbReference>
<dbReference type="PANTHER" id="PTHR21090:SF5">
    <property type="entry name" value="PENTAFUNCTIONAL AROM POLYPEPTIDE"/>
    <property type="match status" value="1"/>
</dbReference>
<dbReference type="Pfam" id="PF00275">
    <property type="entry name" value="EPSP_synthase"/>
    <property type="match status" value="1"/>
</dbReference>
<dbReference type="PIRSF" id="PIRSF000505">
    <property type="entry name" value="EPSPS"/>
    <property type="match status" value="1"/>
</dbReference>
<dbReference type="SUPFAM" id="SSF55205">
    <property type="entry name" value="EPT/RTPC-like"/>
    <property type="match status" value="1"/>
</dbReference>
<dbReference type="PROSITE" id="PS00104">
    <property type="entry name" value="EPSP_SYNTHASE_1"/>
    <property type="match status" value="1"/>
</dbReference>
<dbReference type="PROSITE" id="PS00885">
    <property type="entry name" value="EPSP_SYNTHASE_2"/>
    <property type="match status" value="1"/>
</dbReference>
<sequence>MLNFISKPVGCLKGEITVPGDKSISHRSIIFGAIAIGTSVIDGFLDGEDCIATLKAFQSMGVRIEGPDKQRVIIHGVGKYGLKQPQNIIDCGNSGTSMRLLAGLLAAQQFDSQLTGDESLLKRPMLRISRPLSQMGADVTTQDGKPPIVIKGGKKLNGIHYVMPEASAQVKSCLLLAGMYAEGQTKITENAVSRDHTERMLRTFSYPVQIQDGAIIIDCNGECHGTRLNIPGDISSAAFFIVAASITPGSDVLIRNVGINPTRTGIIHILTEMGADIRVLNQRAYGEEPVADLHIRYSQLKGIDIPASMVPLAIDEFPVIFIAAACAQGKTTLHGAKELRLKESDRIGAMVDGLNQLGVHAEGFDDGILIEGGSIQGGEVNSRGDHRIAMSFAIAGAVASAPVTIKNCANVATSFPSFVTTANMLHFQIEEYS</sequence>
<comment type="function">
    <text evidence="1">Catalyzes the transfer of the enolpyruvyl moiety of phosphoenolpyruvate (PEP) to the 5-hydroxyl of shikimate-3-phosphate (S3P) to produce enolpyruvyl shikimate-3-phosphate and inorganic phosphate.</text>
</comment>
<comment type="catalytic activity">
    <reaction evidence="1">
        <text>3-phosphoshikimate + phosphoenolpyruvate = 5-O-(1-carboxyvinyl)-3-phosphoshikimate + phosphate</text>
        <dbReference type="Rhea" id="RHEA:21256"/>
        <dbReference type="ChEBI" id="CHEBI:43474"/>
        <dbReference type="ChEBI" id="CHEBI:57701"/>
        <dbReference type="ChEBI" id="CHEBI:58702"/>
        <dbReference type="ChEBI" id="CHEBI:145989"/>
        <dbReference type="EC" id="2.5.1.19"/>
    </reaction>
    <physiologicalReaction direction="left-to-right" evidence="1">
        <dbReference type="Rhea" id="RHEA:21257"/>
    </physiologicalReaction>
</comment>
<comment type="pathway">
    <text evidence="1">Metabolic intermediate biosynthesis; chorismate biosynthesis; chorismate from D-erythrose 4-phosphate and phosphoenolpyruvate: step 6/7.</text>
</comment>
<comment type="subunit">
    <text evidence="1">Monomer.</text>
</comment>
<comment type="subcellular location">
    <subcellularLocation>
        <location evidence="1">Cytoplasm</location>
    </subcellularLocation>
</comment>
<comment type="similarity">
    <text evidence="1">Belongs to the EPSP synthase family.</text>
</comment>
<feature type="chain" id="PRO_0000325357" description="3-phosphoshikimate 1-carboxyvinyltransferase">
    <location>
        <begin position="1"/>
        <end position="433"/>
    </location>
</feature>
<feature type="active site" description="Proton acceptor" evidence="1">
    <location>
        <position position="315"/>
    </location>
</feature>
<feature type="binding site" evidence="1">
    <location>
        <position position="22"/>
    </location>
    <ligand>
        <name>3-phosphoshikimate</name>
        <dbReference type="ChEBI" id="CHEBI:145989"/>
    </ligand>
</feature>
<feature type="binding site" evidence="1">
    <location>
        <position position="22"/>
    </location>
    <ligand>
        <name>phosphoenolpyruvate</name>
        <dbReference type="ChEBI" id="CHEBI:58702"/>
    </ligand>
</feature>
<feature type="binding site" evidence="1">
    <location>
        <position position="23"/>
    </location>
    <ligand>
        <name>3-phosphoshikimate</name>
        <dbReference type="ChEBI" id="CHEBI:145989"/>
    </ligand>
</feature>
<feature type="binding site" evidence="1">
    <location>
        <position position="27"/>
    </location>
    <ligand>
        <name>3-phosphoshikimate</name>
        <dbReference type="ChEBI" id="CHEBI:145989"/>
    </ligand>
</feature>
<feature type="binding site" evidence="1">
    <location>
        <position position="95"/>
    </location>
    <ligand>
        <name>phosphoenolpyruvate</name>
        <dbReference type="ChEBI" id="CHEBI:58702"/>
    </ligand>
</feature>
<feature type="binding site" evidence="1">
    <location>
        <position position="123"/>
    </location>
    <ligand>
        <name>phosphoenolpyruvate</name>
        <dbReference type="ChEBI" id="CHEBI:58702"/>
    </ligand>
</feature>
<feature type="binding site" evidence="1">
    <location>
        <position position="167"/>
    </location>
    <ligand>
        <name>3-phosphoshikimate</name>
        <dbReference type="ChEBI" id="CHEBI:145989"/>
    </ligand>
</feature>
<feature type="binding site" evidence="1">
    <location>
        <position position="169"/>
    </location>
    <ligand>
        <name>3-phosphoshikimate</name>
        <dbReference type="ChEBI" id="CHEBI:145989"/>
    </ligand>
</feature>
<feature type="binding site" evidence="1">
    <location>
        <position position="169"/>
    </location>
    <ligand>
        <name>phosphoenolpyruvate</name>
        <dbReference type="ChEBI" id="CHEBI:58702"/>
    </ligand>
</feature>
<feature type="binding site" evidence="1">
    <location>
        <position position="315"/>
    </location>
    <ligand>
        <name>3-phosphoshikimate</name>
        <dbReference type="ChEBI" id="CHEBI:145989"/>
    </ligand>
</feature>
<feature type="binding site" evidence="1">
    <location>
        <position position="342"/>
    </location>
    <ligand>
        <name>3-phosphoshikimate</name>
        <dbReference type="ChEBI" id="CHEBI:145989"/>
    </ligand>
</feature>
<feature type="binding site" evidence="1">
    <location>
        <position position="346"/>
    </location>
    <ligand>
        <name>phosphoenolpyruvate</name>
        <dbReference type="ChEBI" id="CHEBI:58702"/>
    </ligand>
</feature>
<feature type="binding site" evidence="1">
    <location>
        <position position="387"/>
    </location>
    <ligand>
        <name>phosphoenolpyruvate</name>
        <dbReference type="ChEBI" id="CHEBI:58702"/>
    </ligand>
</feature>
<name>AROA_LEGPH</name>
<accession>Q5ZVM1</accession>
<reference key="1">
    <citation type="journal article" date="2004" name="Science">
        <title>The genomic sequence of the accidental pathogen Legionella pneumophila.</title>
        <authorList>
            <person name="Chien M."/>
            <person name="Morozova I."/>
            <person name="Shi S."/>
            <person name="Sheng H."/>
            <person name="Chen J."/>
            <person name="Gomez S.M."/>
            <person name="Asamani G."/>
            <person name="Hill K."/>
            <person name="Nuara J."/>
            <person name="Feder M."/>
            <person name="Rineer J."/>
            <person name="Greenberg J.J."/>
            <person name="Steshenko V."/>
            <person name="Park S.H."/>
            <person name="Zhao B."/>
            <person name="Teplitskaya E."/>
            <person name="Edwards J.R."/>
            <person name="Pampou S."/>
            <person name="Georghiou A."/>
            <person name="Chou I.-C."/>
            <person name="Iannuccilli W."/>
            <person name="Ulz M.E."/>
            <person name="Kim D.H."/>
            <person name="Geringer-Sameth A."/>
            <person name="Goldsberry C."/>
            <person name="Morozov P."/>
            <person name="Fischer S.G."/>
            <person name="Segal G."/>
            <person name="Qu X."/>
            <person name="Rzhetsky A."/>
            <person name="Zhang P."/>
            <person name="Cayanis E."/>
            <person name="De Jong P.J."/>
            <person name="Ju J."/>
            <person name="Kalachikov S."/>
            <person name="Shuman H.A."/>
            <person name="Russo J.J."/>
        </authorList>
    </citation>
    <scope>NUCLEOTIDE SEQUENCE [LARGE SCALE GENOMIC DNA]</scope>
    <source>
        <strain>Philadelphia 1 / ATCC 33152 / DSM 7513</strain>
    </source>
</reference>